<keyword id="KW-0175">Coiled coil</keyword>
<keyword id="KW-0403">Intermediate filament</keyword>
<keyword id="KW-0964">Secreted</keyword>
<sequence>MASHSSVSYRSVRTGGTSAMIGSSGYGGSSSSRAMGLGMGAAGLSMGGGSFRVGSAGIGGMGISSGIGGMGISSRAGGMSAYGGAASGGAGGFVSGGVPMLGYGGGAGGFIGGVSPGIMASPAFTAGRAITSAGMSGVVGTLGPAGGMVPSLVSRDEVKNILGTLNQRLASYVDKVRQLTIENETMEEELKNLTGGVPMSPDSTVNLENVETQVTEMLTEVSNLTLERVRLEIDVDHLRATADEIKSKYEFELGVRMQLETDIANMKRDLEAANDMRVDLDSKFNFLTEELTFQRKTQMEELNTLKQQFGRLGPVQTSVIELDNVKSVNLTDALNVMREEYQQVVTKNVQEAETYCKMQIDQIQGISTQTTEQISILDKEINTLEKELQPLNVEYQRLLTTYQTLGDRLTDLQNRESIDLVQFQNTYTRYEQEIEGNQVDLQRQLVTYQQLLDVKTALDAEIATYKKLLEGQELMVRTAMADDFAHATVVRSGTLGGASSSSVGYGASSTTLGAISGGYSTGGGASYSAGAGGASYSAGAGGASYGVGGGYSGGSSAMMEGSSSGGHSMYSSSSMKRSSSKSASASAGGYGTSGHDSTIILQQ</sequence>
<accession>Q90502</accession>
<proteinExistence type="evidence at transcript level"/>
<protein>
    <recommendedName>
        <fullName>Thread biopolymer filament subunit gamma</fullName>
    </recommendedName>
</protein>
<comment type="function">
    <text>Released extracellularly into seawater and provides physical and biological defense against invasive organism by modulation of the viscoelastic properties of mucus.</text>
</comment>
<comment type="subunit">
    <text>Coiled-coil heterodimer of an alpha and a gamma subunit. Assemble into 10 nm filaments. Forms a massive, conical, intermediate filament biopolymer of approximately 60 cm.</text>
</comment>
<comment type="subcellular location">
    <subcellularLocation>
        <location>Secreted</location>
        <location>Extracellular space</location>
    </subcellularLocation>
</comment>
<comment type="similarity">
    <text evidence="1">Belongs to the intermediate filament family.</text>
</comment>
<name>TBFG_EPTST</name>
<evidence type="ECO:0000255" key="1">
    <source>
        <dbReference type="PROSITE-ProRule" id="PRU01188"/>
    </source>
</evidence>
<evidence type="ECO:0000256" key="2">
    <source>
        <dbReference type="SAM" id="MobiDB-lite"/>
    </source>
</evidence>
<reference key="1">
    <citation type="journal article" date="1995" name="Int. J. Biol. Macromol.">
        <title>Hagfish biopolymer: a type I/type II homologue of epidermal keratin intermediate filaments.</title>
        <authorList>
            <person name="Koch E.A."/>
            <person name="Spitzer R.H."/>
            <person name="Pithawalla R.B."/>
            <person name="Castillos F.A. III"/>
            <person name="Parry D.A."/>
        </authorList>
    </citation>
    <scope>NUCLEOTIDE SEQUENCE [MRNA]</scope>
    <source>
        <tissue>Slime gland</tissue>
    </source>
</reference>
<dbReference type="EMBL" id="U20546">
    <property type="protein sequence ID" value="AAA93157.1"/>
    <property type="molecule type" value="mRNA"/>
</dbReference>
<dbReference type="SMR" id="Q90502"/>
<dbReference type="GO" id="GO:0005576">
    <property type="term" value="C:extracellular region"/>
    <property type="evidence" value="ECO:0007669"/>
    <property type="project" value="UniProtKB-SubCell"/>
</dbReference>
<dbReference type="GO" id="GO:0005882">
    <property type="term" value="C:intermediate filament"/>
    <property type="evidence" value="ECO:0007669"/>
    <property type="project" value="UniProtKB-KW"/>
</dbReference>
<dbReference type="GO" id="GO:0005198">
    <property type="term" value="F:structural molecule activity"/>
    <property type="evidence" value="ECO:0007669"/>
    <property type="project" value="InterPro"/>
</dbReference>
<dbReference type="Gene3D" id="1.20.5.170">
    <property type="match status" value="1"/>
</dbReference>
<dbReference type="Gene3D" id="1.20.5.500">
    <property type="entry name" value="Single helix bin"/>
    <property type="match status" value="1"/>
</dbReference>
<dbReference type="Gene3D" id="1.20.5.1160">
    <property type="entry name" value="Vasodilator-stimulated phosphoprotein"/>
    <property type="match status" value="1"/>
</dbReference>
<dbReference type="InterPro" id="IPR018039">
    <property type="entry name" value="IF_conserved"/>
</dbReference>
<dbReference type="InterPro" id="IPR039008">
    <property type="entry name" value="IF_rod_dom"/>
</dbReference>
<dbReference type="InterPro" id="IPR002957">
    <property type="entry name" value="Keratin_I"/>
</dbReference>
<dbReference type="PANTHER" id="PTHR23239">
    <property type="entry name" value="INTERMEDIATE FILAMENT"/>
    <property type="match status" value="1"/>
</dbReference>
<dbReference type="PANTHER" id="PTHR23239:SF366">
    <property type="entry name" value="KERATIN, TYPE I CYTOSKELETAL 47 KDA"/>
    <property type="match status" value="1"/>
</dbReference>
<dbReference type="Pfam" id="PF00038">
    <property type="entry name" value="Filament"/>
    <property type="match status" value="1"/>
</dbReference>
<dbReference type="SMART" id="SM01391">
    <property type="entry name" value="Filament"/>
    <property type="match status" value="1"/>
</dbReference>
<dbReference type="SUPFAM" id="SSF64593">
    <property type="entry name" value="Intermediate filament protein, coiled coil region"/>
    <property type="match status" value="2"/>
</dbReference>
<dbReference type="PROSITE" id="PS00226">
    <property type="entry name" value="IF_ROD_1"/>
    <property type="match status" value="1"/>
</dbReference>
<dbReference type="PROSITE" id="PS51842">
    <property type="entry name" value="IF_ROD_2"/>
    <property type="match status" value="1"/>
</dbReference>
<organism>
    <name type="scientific">Eptatretus stoutii</name>
    <name type="common">Pacific hagfish</name>
    <dbReference type="NCBI Taxonomy" id="7765"/>
    <lineage>
        <taxon>Eukaryota</taxon>
        <taxon>Metazoa</taxon>
        <taxon>Chordata</taxon>
        <taxon>Craniata</taxon>
        <taxon>Vertebrata</taxon>
        <taxon>Cyclostomata</taxon>
        <taxon>Myxini</taxon>
        <taxon>Myxiniformes</taxon>
        <taxon>Myxinidae</taxon>
        <taxon>Eptatretinae</taxon>
        <taxon>Eptatretus</taxon>
    </lineage>
</organism>
<feature type="chain" id="PRO_0000063864" description="Thread biopolymer filament subunit gamma">
    <location>
        <begin position="1"/>
        <end position="603"/>
    </location>
</feature>
<feature type="domain" description="IF rod" evidence="1">
    <location>
        <begin position="158"/>
        <end position="476"/>
    </location>
</feature>
<feature type="region of interest" description="Head">
    <location>
        <begin position="1"/>
        <end position="191"/>
    </location>
</feature>
<feature type="region of interest" description="Coil 1A">
    <location>
        <begin position="193"/>
        <end position="227"/>
    </location>
</feature>
<feature type="region of interest" description="Linker 1">
    <location>
        <begin position="228"/>
        <end position="240"/>
    </location>
</feature>
<feature type="region of interest" description="Coil 1B">
    <location>
        <begin position="241"/>
        <end position="341"/>
    </location>
</feature>
<feature type="region of interest" description="Linker 12">
    <location>
        <begin position="342"/>
        <end position="362"/>
    </location>
</feature>
<feature type="region of interest" description="Coil 2A">
    <location>
        <begin position="363"/>
        <end position="381"/>
    </location>
</feature>
<feature type="region of interest" description="Linker 2">
    <location>
        <begin position="382"/>
        <end position="389"/>
    </location>
</feature>
<feature type="region of interest" description="Coil 2B">
    <location>
        <begin position="390"/>
        <end position="510"/>
    </location>
</feature>
<feature type="region of interest" description="Tail">
    <location>
        <begin position="511"/>
        <end position="603"/>
    </location>
</feature>
<feature type="region of interest" description="Disordered" evidence="2">
    <location>
        <begin position="562"/>
        <end position="603"/>
    </location>
</feature>
<feature type="compositionally biased region" description="Low complexity" evidence="2">
    <location>
        <begin position="562"/>
        <end position="587"/>
    </location>
</feature>